<organism>
    <name type="scientific">Arabidopsis lyrata subsp. lyrata</name>
    <name type="common">Lyre-leaved rock-cress</name>
    <dbReference type="NCBI Taxonomy" id="81972"/>
    <lineage>
        <taxon>Eukaryota</taxon>
        <taxon>Viridiplantae</taxon>
        <taxon>Streptophyta</taxon>
        <taxon>Embryophyta</taxon>
        <taxon>Tracheophyta</taxon>
        <taxon>Spermatophyta</taxon>
        <taxon>Magnoliopsida</taxon>
        <taxon>eudicotyledons</taxon>
        <taxon>Gunneridae</taxon>
        <taxon>Pentapetalae</taxon>
        <taxon>rosids</taxon>
        <taxon>malvids</taxon>
        <taxon>Brassicales</taxon>
        <taxon>Brassicaceae</taxon>
        <taxon>Camelineae</taxon>
        <taxon>Arabidopsis</taxon>
    </lineage>
</organism>
<accession>D7MFJ8</accession>
<evidence type="ECO:0000250" key="1"/>
<evidence type="ECO:0000250" key="2">
    <source>
        <dbReference type="UniProtKB" id="Q9SQU2"/>
    </source>
</evidence>
<evidence type="ECO:0000255" key="3"/>
<evidence type="ECO:0000305" key="4"/>
<proteinExistence type="inferred from homology"/>
<comment type="subunit">
    <text evidence="1">Homodimer and heterodimers.</text>
</comment>
<comment type="subcellular location">
    <subcellularLocation>
        <location evidence="1">Cell membrane</location>
        <topology evidence="1">Multi-pass membrane protein</topology>
    </subcellularLocation>
</comment>
<comment type="similarity">
    <text evidence="4">Belongs to the Casparian strip membrane proteins (CASP) family.</text>
</comment>
<keyword id="KW-0007">Acetylation</keyword>
<keyword id="KW-1003">Cell membrane</keyword>
<keyword id="KW-0472">Membrane</keyword>
<keyword id="KW-1185">Reference proteome</keyword>
<keyword id="KW-0812">Transmembrane</keyword>
<keyword id="KW-1133">Transmembrane helix</keyword>
<protein>
    <recommendedName>
        <fullName>CASP-like protein 1B2</fullName>
        <shortName>AlCASPL1B2</shortName>
    </recommendedName>
</protein>
<gene>
    <name type="ORF">ARALYDRAFT_492822</name>
</gene>
<name>CSPLC_ARALL</name>
<reference key="1">
    <citation type="journal article" date="2011" name="Nat. Genet.">
        <title>The Arabidopsis lyrata genome sequence and the basis of rapid genome size change.</title>
        <authorList>
            <person name="Hu T.T."/>
            <person name="Pattyn P."/>
            <person name="Bakker E.G."/>
            <person name="Cao J."/>
            <person name="Cheng J.-F."/>
            <person name="Clark R.M."/>
            <person name="Fahlgren N."/>
            <person name="Fawcett J.A."/>
            <person name="Grimwood J."/>
            <person name="Gundlach H."/>
            <person name="Haberer G."/>
            <person name="Hollister J.D."/>
            <person name="Ossowski S."/>
            <person name="Ottilar R.P."/>
            <person name="Salamov A.A."/>
            <person name="Schneeberger K."/>
            <person name="Spannagl M."/>
            <person name="Wang X."/>
            <person name="Yang L."/>
            <person name="Nasrallah M.E."/>
            <person name="Bergelson J."/>
            <person name="Carrington J.C."/>
            <person name="Gaut B.S."/>
            <person name="Schmutz J."/>
            <person name="Mayer K.F.X."/>
            <person name="Van de Peer Y."/>
            <person name="Grigoriev I.V."/>
            <person name="Nordborg M."/>
            <person name="Weigel D."/>
            <person name="Guo Y.-L."/>
        </authorList>
    </citation>
    <scope>NUCLEOTIDE SEQUENCE [LARGE SCALE GENOMIC DNA]</scope>
    <source>
        <strain>cv. MN47</strain>
    </source>
</reference>
<reference key="2">
    <citation type="journal article" date="2014" name="Plant Physiol.">
        <title>Functional and evolutionary analysis of the CASPARIAN STRIP MEMBRANE DOMAIN PROTEIN family.</title>
        <authorList>
            <person name="Roppolo D."/>
            <person name="Boeckmann B."/>
            <person name="Pfister A."/>
            <person name="Boutet E."/>
            <person name="Rubio M.C."/>
            <person name="Denervaud-Tendon V."/>
            <person name="Vermeer J.E."/>
            <person name="Gheyselinck J."/>
            <person name="Xenarios I."/>
            <person name="Geldner N."/>
        </authorList>
    </citation>
    <scope>GENE FAMILY</scope>
    <scope>NOMENCLATURE</scope>
</reference>
<sequence>MAREKIVVAGGSTKSWKLLLGLRVFAFMATLAAAIVMSLNKETKTLVVATIGTLPIKATLTAKFQDTPAFVFFVIANVMVSFHNLLMIVLQIFSRKLEYKGVRLLSIAILDMLNATLVSAAANAAVFVAELGKNGNKHAKWNKVCDRFATYCDHGAGALIAAFAGVILMLLVSSVSISRLLINSKHLSTTATTTAVV</sequence>
<dbReference type="EMBL" id="GL348719">
    <property type="protein sequence ID" value="EFH46192.1"/>
    <property type="molecule type" value="Genomic_DNA"/>
</dbReference>
<dbReference type="RefSeq" id="XP_002869933.1">
    <property type="nucleotide sequence ID" value="XM_002869887.1"/>
</dbReference>
<dbReference type="SMR" id="D7MFJ8"/>
<dbReference type="STRING" id="81972.D7MFJ8"/>
<dbReference type="EnsemblPlants" id="fgenesh2_kg.7__2255__AT4G20390.1">
    <property type="protein sequence ID" value="fgenesh2_kg.7__2255__AT4G20390.1"/>
    <property type="gene ID" value="fgenesh2_kg.7__2255__AT4G20390.1"/>
</dbReference>
<dbReference type="Gramene" id="fgenesh2_kg.7__2255__AT4G20390.1">
    <property type="protein sequence ID" value="fgenesh2_kg.7__2255__AT4G20390.1"/>
    <property type="gene ID" value="fgenesh2_kg.7__2255__AT4G20390.1"/>
</dbReference>
<dbReference type="eggNOG" id="ENOG502RYH6">
    <property type="taxonomic scope" value="Eukaryota"/>
</dbReference>
<dbReference type="HOGENOM" id="CLU_066104_1_0_1"/>
<dbReference type="OrthoDB" id="610574at2759"/>
<dbReference type="Proteomes" id="UP000008694">
    <property type="component" value="Unassembled WGS sequence"/>
</dbReference>
<dbReference type="GO" id="GO:0005886">
    <property type="term" value="C:plasma membrane"/>
    <property type="evidence" value="ECO:0007669"/>
    <property type="project" value="UniProtKB-SubCell"/>
</dbReference>
<dbReference type="InterPro" id="IPR006459">
    <property type="entry name" value="CASP/CASPL"/>
</dbReference>
<dbReference type="InterPro" id="IPR006702">
    <property type="entry name" value="CASP_dom"/>
</dbReference>
<dbReference type="InterPro" id="IPR044173">
    <property type="entry name" value="CASPL"/>
</dbReference>
<dbReference type="NCBIfam" id="TIGR01569">
    <property type="entry name" value="A_tha_TIGR01569"/>
    <property type="match status" value="1"/>
</dbReference>
<dbReference type="PANTHER" id="PTHR36488">
    <property type="entry name" value="CASP-LIKE PROTEIN 1U1"/>
    <property type="match status" value="1"/>
</dbReference>
<dbReference type="PANTHER" id="PTHR36488:SF8">
    <property type="entry name" value="CASP-LIKE PROTEIN 1U1"/>
    <property type="match status" value="1"/>
</dbReference>
<dbReference type="Pfam" id="PF04535">
    <property type="entry name" value="CASP_dom"/>
    <property type="match status" value="1"/>
</dbReference>
<feature type="initiator methionine" description="Removed" evidence="2">
    <location>
        <position position="1"/>
    </location>
</feature>
<feature type="chain" id="PRO_0000412011" description="CASP-like protein 1B2">
    <location>
        <begin position="2"/>
        <end position="197"/>
    </location>
</feature>
<feature type="topological domain" description="Cytoplasmic" evidence="3">
    <location>
        <begin position="2"/>
        <end position="17"/>
    </location>
</feature>
<feature type="transmembrane region" description="Helical" evidence="3">
    <location>
        <begin position="18"/>
        <end position="38"/>
    </location>
</feature>
<feature type="topological domain" description="Extracellular" evidence="3">
    <location>
        <begin position="39"/>
        <end position="69"/>
    </location>
</feature>
<feature type="transmembrane region" description="Helical" evidence="3">
    <location>
        <begin position="70"/>
        <end position="90"/>
    </location>
</feature>
<feature type="topological domain" description="Cytoplasmic" evidence="3">
    <location>
        <begin position="91"/>
        <end position="106"/>
    </location>
</feature>
<feature type="transmembrane region" description="Helical" evidence="3">
    <location>
        <begin position="107"/>
        <end position="127"/>
    </location>
</feature>
<feature type="topological domain" description="Extracellular" evidence="3">
    <location>
        <begin position="128"/>
        <end position="156"/>
    </location>
</feature>
<feature type="transmembrane region" description="Helical" evidence="3">
    <location>
        <begin position="157"/>
        <end position="177"/>
    </location>
</feature>
<feature type="topological domain" description="Cytoplasmic" evidence="3">
    <location>
        <begin position="178"/>
        <end position="197"/>
    </location>
</feature>
<feature type="modified residue" description="N-acetylalanine" evidence="2">
    <location>
        <position position="2"/>
    </location>
</feature>